<sequence length="216" mass="23743">MLRLSERNMKVLLAAALIAGSVFFLLLPGPSAADEKKKGPKVTVKVYFDLRIGDEDVGRVIFGLFGKTVPKTVDNFVALATGEKGFGYKNSKFHRVIKDFMIQGGDFTRGDGTGGKSIYGERFPDENFKLKHYGPGWVSMANAGKDTNGSQFFITTVKTAWLDGKHVVFGKVLEGMEVVRKVESTKTDSRDKPLKDVIIADCGKIEVEKPFAIAKE</sequence>
<name>PPIB_HUMAN</name>
<gene>
    <name type="primary">PPIB</name>
    <name type="synonym">CYPB</name>
</gene>
<protein>
    <recommendedName>
        <fullName>Peptidyl-prolyl cis-trans isomerase B</fullName>
        <shortName>PPIase B</shortName>
        <ecNumber evidence="12">5.2.1.8</ecNumber>
    </recommendedName>
    <alternativeName>
        <fullName>CYP-S1</fullName>
    </alternativeName>
    <alternativeName>
        <fullName>Cyclophilin B</fullName>
    </alternativeName>
    <alternativeName>
        <fullName>Rotamase B</fullName>
    </alternativeName>
    <alternativeName>
        <fullName>S-cyclophilin</fullName>
        <shortName>SCYLP</shortName>
    </alternativeName>
</protein>
<feature type="signal peptide" evidence="9">
    <location>
        <begin position="1"/>
        <end position="33"/>
    </location>
</feature>
<feature type="chain" id="PRO_0000025479" description="Peptidyl-prolyl cis-trans isomerase B">
    <location>
        <begin position="34"/>
        <end position="216"/>
    </location>
</feature>
<feature type="domain" description="PPIase cyclophilin-type" evidence="4">
    <location>
        <begin position="47"/>
        <end position="204"/>
    </location>
</feature>
<feature type="short sequence motif" description="Prevents secretion from ER">
    <location>
        <begin position="213"/>
        <end position="216"/>
    </location>
</feature>
<feature type="modified residue" description="N6-succinyllysine" evidence="2">
    <location>
        <position position="84"/>
    </location>
</feature>
<feature type="modified residue" description="N6-acetyllysine" evidence="2">
    <location>
        <position position="165"/>
    </location>
</feature>
<feature type="modified residue" description="S-nitrosocysteine" evidence="2">
    <location>
        <position position="202"/>
    </location>
</feature>
<feature type="modified residue" description="N6-acetyllysine; alternate" evidence="1">
    <location>
        <position position="209"/>
    </location>
</feature>
<feature type="modified residue" description="N6-succinyllysine; alternate" evidence="1">
    <location>
        <position position="209"/>
    </location>
</feature>
<feature type="glycosylation site" description="N-linked (GlcNAc...) asparagine" evidence="3">
    <location>
        <position position="148"/>
    </location>
</feature>
<feature type="sequence variant" id="VAR_063436" description="In OI9; patients have white sclerae, normal dentition, no rhizomelia or severe deformity of long bones; dbSNP:rs137853864." evidence="10">
    <original>M</original>
    <variation>R</variation>
    <location>
        <position position="9"/>
    </location>
</feature>
<feature type="sequence variant" id="VAR_047711" description="In dbSNP:rs11558595.">
    <original>V</original>
    <variation>L</variation>
    <location>
        <position position="60"/>
    </location>
</feature>
<feature type="mutagenesis site" description="Impairs interaction with CLGN and CANX." evidence="13">
    <original>K</original>
    <variation>A</variation>
    <location>
        <position position="129"/>
    </location>
</feature>
<feature type="sequence conflict" description="In Ref. 8; AAA52150." evidence="15" ref="8">
    <original>S</original>
    <variation>R</variation>
    <location>
        <position position="5"/>
    </location>
</feature>
<feature type="sequence conflict" description="In Ref. 3; CAG33110." evidence="15" ref="3">
    <original>E</original>
    <variation>D</variation>
    <location>
        <position position="216"/>
    </location>
</feature>
<feature type="strand" evidence="18">
    <location>
        <begin position="41"/>
        <end position="52"/>
    </location>
</feature>
<feature type="strand" evidence="18">
    <location>
        <begin position="55"/>
        <end position="64"/>
    </location>
</feature>
<feature type="turn" evidence="18">
    <location>
        <begin position="66"/>
        <end position="68"/>
    </location>
</feature>
<feature type="helix" evidence="18">
    <location>
        <begin position="70"/>
        <end position="81"/>
    </location>
</feature>
<feature type="turn" evidence="18">
    <location>
        <begin position="82"/>
        <end position="84"/>
    </location>
</feature>
<feature type="strand" evidence="18">
    <location>
        <begin position="95"/>
        <end position="97"/>
    </location>
</feature>
<feature type="turn" evidence="18">
    <location>
        <begin position="98"/>
        <end position="100"/>
    </location>
</feature>
<feature type="strand" evidence="18">
    <location>
        <begin position="101"/>
        <end position="104"/>
    </location>
</feature>
<feature type="turn" evidence="18">
    <location>
        <begin position="107"/>
        <end position="109"/>
    </location>
</feature>
<feature type="strand" evidence="18">
    <location>
        <begin position="110"/>
        <end position="113"/>
    </location>
</feature>
<feature type="strand" evidence="19">
    <location>
        <begin position="118"/>
        <end position="121"/>
    </location>
</feature>
<feature type="strand" evidence="18">
    <location>
        <begin position="137"/>
        <end position="140"/>
    </location>
</feature>
<feature type="strand" evidence="17">
    <location>
        <begin position="142"/>
        <end position="144"/>
    </location>
</feature>
<feature type="strand" evidence="18">
    <location>
        <begin position="152"/>
        <end position="157"/>
    </location>
</feature>
<feature type="helix" evidence="18">
    <location>
        <begin position="160"/>
        <end position="162"/>
    </location>
</feature>
<feature type="turn" evidence="18">
    <location>
        <begin position="163"/>
        <end position="165"/>
    </location>
</feature>
<feature type="strand" evidence="18">
    <location>
        <begin position="168"/>
        <end position="174"/>
    </location>
</feature>
<feature type="helix" evidence="18">
    <location>
        <begin position="176"/>
        <end position="183"/>
    </location>
</feature>
<feature type="strand" evidence="18">
    <location>
        <begin position="193"/>
        <end position="195"/>
    </location>
</feature>
<feature type="strand" evidence="18">
    <location>
        <begin position="197"/>
        <end position="212"/>
    </location>
</feature>
<reference key="1">
    <citation type="journal article" date="1991" name="J. Biol. Chem.">
        <title>A novel secreted cyclophilin-like protein (SCYLP).</title>
        <authorList>
            <person name="Spik G."/>
            <person name="Haendler B."/>
            <person name="Delmas O."/>
            <person name="Mariller C."/>
            <person name="Chamoux M."/>
            <person name="Maes P."/>
            <person name="Tartar A."/>
            <person name="Montreuil J."/>
            <person name="Stedman K."/>
            <person name="Kocher H.P."/>
            <person name="Keller R."/>
            <person name="Hiestand P.C."/>
            <person name="Movva N.R."/>
        </authorList>
    </citation>
    <scope>NUCLEOTIDE SEQUENCE [MRNA]</scope>
</reference>
<reference key="2">
    <citation type="journal article" date="2004" name="Nat. Genet.">
        <title>Complete sequencing and characterization of 21,243 full-length human cDNAs.</title>
        <authorList>
            <person name="Ota T."/>
            <person name="Suzuki Y."/>
            <person name="Nishikawa T."/>
            <person name="Otsuki T."/>
            <person name="Sugiyama T."/>
            <person name="Irie R."/>
            <person name="Wakamatsu A."/>
            <person name="Hayashi K."/>
            <person name="Sato H."/>
            <person name="Nagai K."/>
            <person name="Kimura K."/>
            <person name="Makita H."/>
            <person name="Sekine M."/>
            <person name="Obayashi M."/>
            <person name="Nishi T."/>
            <person name="Shibahara T."/>
            <person name="Tanaka T."/>
            <person name="Ishii S."/>
            <person name="Yamamoto J."/>
            <person name="Saito K."/>
            <person name="Kawai Y."/>
            <person name="Isono Y."/>
            <person name="Nakamura Y."/>
            <person name="Nagahari K."/>
            <person name="Murakami K."/>
            <person name="Yasuda T."/>
            <person name="Iwayanagi T."/>
            <person name="Wagatsuma M."/>
            <person name="Shiratori A."/>
            <person name="Sudo H."/>
            <person name="Hosoiri T."/>
            <person name="Kaku Y."/>
            <person name="Kodaira H."/>
            <person name="Kondo H."/>
            <person name="Sugawara M."/>
            <person name="Takahashi M."/>
            <person name="Kanda K."/>
            <person name="Yokoi T."/>
            <person name="Furuya T."/>
            <person name="Kikkawa E."/>
            <person name="Omura Y."/>
            <person name="Abe K."/>
            <person name="Kamihara K."/>
            <person name="Katsuta N."/>
            <person name="Sato K."/>
            <person name="Tanikawa M."/>
            <person name="Yamazaki M."/>
            <person name="Ninomiya K."/>
            <person name="Ishibashi T."/>
            <person name="Yamashita H."/>
            <person name="Murakawa K."/>
            <person name="Fujimori K."/>
            <person name="Tanai H."/>
            <person name="Kimata M."/>
            <person name="Watanabe M."/>
            <person name="Hiraoka S."/>
            <person name="Chiba Y."/>
            <person name="Ishida S."/>
            <person name="Ono Y."/>
            <person name="Takiguchi S."/>
            <person name="Watanabe S."/>
            <person name="Yosida M."/>
            <person name="Hotuta T."/>
            <person name="Kusano J."/>
            <person name="Kanehori K."/>
            <person name="Takahashi-Fujii A."/>
            <person name="Hara H."/>
            <person name="Tanase T.-O."/>
            <person name="Nomura Y."/>
            <person name="Togiya S."/>
            <person name="Komai F."/>
            <person name="Hara R."/>
            <person name="Takeuchi K."/>
            <person name="Arita M."/>
            <person name="Imose N."/>
            <person name="Musashino K."/>
            <person name="Yuuki H."/>
            <person name="Oshima A."/>
            <person name="Sasaki N."/>
            <person name="Aotsuka S."/>
            <person name="Yoshikawa Y."/>
            <person name="Matsunawa H."/>
            <person name="Ichihara T."/>
            <person name="Shiohata N."/>
            <person name="Sano S."/>
            <person name="Moriya S."/>
            <person name="Momiyama H."/>
            <person name="Satoh N."/>
            <person name="Takami S."/>
            <person name="Terashima Y."/>
            <person name="Suzuki O."/>
            <person name="Nakagawa S."/>
            <person name="Senoh A."/>
            <person name="Mizoguchi H."/>
            <person name="Goto Y."/>
            <person name="Shimizu F."/>
            <person name="Wakebe H."/>
            <person name="Hishigaki H."/>
            <person name="Watanabe T."/>
            <person name="Sugiyama A."/>
            <person name="Takemoto M."/>
            <person name="Kawakami B."/>
            <person name="Yamazaki M."/>
            <person name="Watanabe K."/>
            <person name="Kumagai A."/>
            <person name="Itakura S."/>
            <person name="Fukuzumi Y."/>
            <person name="Fujimori Y."/>
            <person name="Komiyama M."/>
            <person name="Tashiro H."/>
            <person name="Tanigami A."/>
            <person name="Fujiwara T."/>
            <person name="Ono T."/>
            <person name="Yamada K."/>
            <person name="Fujii Y."/>
            <person name="Ozaki K."/>
            <person name="Hirao M."/>
            <person name="Ohmori Y."/>
            <person name="Kawabata A."/>
            <person name="Hikiji T."/>
            <person name="Kobatake N."/>
            <person name="Inagaki H."/>
            <person name="Ikema Y."/>
            <person name="Okamoto S."/>
            <person name="Okitani R."/>
            <person name="Kawakami T."/>
            <person name="Noguchi S."/>
            <person name="Itoh T."/>
            <person name="Shigeta K."/>
            <person name="Senba T."/>
            <person name="Matsumura K."/>
            <person name="Nakajima Y."/>
            <person name="Mizuno T."/>
            <person name="Morinaga M."/>
            <person name="Sasaki M."/>
            <person name="Togashi T."/>
            <person name="Oyama M."/>
            <person name="Hata H."/>
            <person name="Watanabe M."/>
            <person name="Komatsu T."/>
            <person name="Mizushima-Sugano J."/>
            <person name="Satoh T."/>
            <person name="Shirai Y."/>
            <person name="Takahashi Y."/>
            <person name="Nakagawa K."/>
            <person name="Okumura K."/>
            <person name="Nagase T."/>
            <person name="Nomura N."/>
            <person name="Kikuchi H."/>
            <person name="Masuho Y."/>
            <person name="Yamashita R."/>
            <person name="Nakai K."/>
            <person name="Yada T."/>
            <person name="Nakamura Y."/>
            <person name="Ohara O."/>
            <person name="Isogai T."/>
            <person name="Sugano S."/>
        </authorList>
    </citation>
    <scope>NUCLEOTIDE SEQUENCE [LARGE SCALE MRNA]</scope>
</reference>
<reference key="3">
    <citation type="submission" date="2004-06" db="EMBL/GenBank/DDBJ databases">
        <title>Cloning of human full open reading frames in Gateway(TM) system entry vector (pDONR201).</title>
        <authorList>
            <person name="Ebert L."/>
            <person name="Schick M."/>
            <person name="Neubert P."/>
            <person name="Schatten R."/>
            <person name="Henze S."/>
            <person name="Korn B."/>
        </authorList>
    </citation>
    <scope>NUCLEOTIDE SEQUENCE [LARGE SCALE MRNA]</scope>
</reference>
<reference key="4">
    <citation type="submission" date="2005-03" db="EMBL/GenBank/DDBJ databases">
        <authorList>
            <consortium name="NIEHS SNPs program"/>
        </authorList>
    </citation>
    <scope>NUCLEOTIDE SEQUENCE [GENOMIC DNA]</scope>
</reference>
<reference key="5">
    <citation type="journal article" date="2006" name="Nature">
        <title>Analysis of the DNA sequence and duplication history of human chromosome 15.</title>
        <authorList>
            <person name="Zody M.C."/>
            <person name="Garber M."/>
            <person name="Sharpe T."/>
            <person name="Young S.K."/>
            <person name="Rowen L."/>
            <person name="O'Neill K."/>
            <person name="Whittaker C.A."/>
            <person name="Kamal M."/>
            <person name="Chang J.L."/>
            <person name="Cuomo C.A."/>
            <person name="Dewar K."/>
            <person name="FitzGerald M.G."/>
            <person name="Kodira C.D."/>
            <person name="Madan A."/>
            <person name="Qin S."/>
            <person name="Yang X."/>
            <person name="Abbasi N."/>
            <person name="Abouelleil A."/>
            <person name="Arachchi H.M."/>
            <person name="Baradarani L."/>
            <person name="Birditt B."/>
            <person name="Bloom S."/>
            <person name="Bloom T."/>
            <person name="Borowsky M.L."/>
            <person name="Burke J."/>
            <person name="Butler J."/>
            <person name="Cook A."/>
            <person name="DeArellano K."/>
            <person name="DeCaprio D."/>
            <person name="Dorris L. III"/>
            <person name="Dors M."/>
            <person name="Eichler E.E."/>
            <person name="Engels R."/>
            <person name="Fahey J."/>
            <person name="Fleetwood P."/>
            <person name="Friedman C."/>
            <person name="Gearin G."/>
            <person name="Hall J.L."/>
            <person name="Hensley G."/>
            <person name="Johnson E."/>
            <person name="Jones C."/>
            <person name="Kamat A."/>
            <person name="Kaur A."/>
            <person name="Locke D.P."/>
            <person name="Madan A."/>
            <person name="Munson G."/>
            <person name="Jaffe D.B."/>
            <person name="Lui A."/>
            <person name="Macdonald P."/>
            <person name="Mauceli E."/>
            <person name="Naylor J.W."/>
            <person name="Nesbitt R."/>
            <person name="Nicol R."/>
            <person name="O'Leary S.B."/>
            <person name="Ratcliffe A."/>
            <person name="Rounsley S."/>
            <person name="She X."/>
            <person name="Sneddon K.M.B."/>
            <person name="Stewart S."/>
            <person name="Sougnez C."/>
            <person name="Stone S.M."/>
            <person name="Topham K."/>
            <person name="Vincent D."/>
            <person name="Wang S."/>
            <person name="Zimmer A.R."/>
            <person name="Birren B.W."/>
            <person name="Hood L."/>
            <person name="Lander E.S."/>
            <person name="Nusbaum C."/>
        </authorList>
    </citation>
    <scope>NUCLEOTIDE SEQUENCE [LARGE SCALE GENOMIC DNA]</scope>
</reference>
<reference key="6">
    <citation type="submission" date="2005-07" db="EMBL/GenBank/DDBJ databases">
        <authorList>
            <person name="Mural R.J."/>
            <person name="Istrail S."/>
            <person name="Sutton G.G."/>
            <person name="Florea L."/>
            <person name="Halpern A.L."/>
            <person name="Mobarry C.M."/>
            <person name="Lippert R."/>
            <person name="Walenz B."/>
            <person name="Shatkay H."/>
            <person name="Dew I."/>
            <person name="Miller J.R."/>
            <person name="Flanigan M.J."/>
            <person name="Edwards N.J."/>
            <person name="Bolanos R."/>
            <person name="Fasulo D."/>
            <person name="Halldorsson B.V."/>
            <person name="Hannenhalli S."/>
            <person name="Turner R."/>
            <person name="Yooseph S."/>
            <person name="Lu F."/>
            <person name="Nusskern D.R."/>
            <person name="Shue B.C."/>
            <person name="Zheng X.H."/>
            <person name="Zhong F."/>
            <person name="Delcher A.L."/>
            <person name="Huson D.H."/>
            <person name="Kravitz S.A."/>
            <person name="Mouchard L."/>
            <person name="Reinert K."/>
            <person name="Remington K.A."/>
            <person name="Clark A.G."/>
            <person name="Waterman M.S."/>
            <person name="Eichler E.E."/>
            <person name="Adams M.D."/>
            <person name="Hunkapiller M.W."/>
            <person name="Myers E.W."/>
            <person name="Venter J.C."/>
        </authorList>
    </citation>
    <scope>NUCLEOTIDE SEQUENCE [LARGE SCALE GENOMIC DNA]</scope>
</reference>
<reference key="7">
    <citation type="journal article" date="2004" name="Genome Res.">
        <title>The status, quality, and expansion of the NIH full-length cDNA project: the Mammalian Gene Collection (MGC).</title>
        <authorList>
            <consortium name="The MGC Project Team"/>
        </authorList>
    </citation>
    <scope>NUCLEOTIDE SEQUENCE [LARGE SCALE MRNA]</scope>
    <source>
        <tissue>Brain</tissue>
        <tissue>Prostate</tissue>
        <tissue>Skin</tissue>
    </source>
</reference>
<reference key="8">
    <citation type="journal article" date="1991" name="Proc. Natl. Acad. Sci. U.S.A.">
        <title>Human cyclophilin B: a second cyclophilin gene encodes a peptidyl-prolyl isomerase with a signal sequence.</title>
        <authorList>
            <person name="Price E.R."/>
            <person name="Zydowsky L.D."/>
            <person name="Jin M."/>
            <person name="Hunter C.H."/>
            <person name="McKeon F.D."/>
            <person name="Walsh C.T."/>
        </authorList>
    </citation>
    <scope>NUCLEOTIDE SEQUENCE [MRNA] OF 5-216</scope>
    <scope>PROTEIN SEQUENCE OF 34-48</scope>
</reference>
<reference key="9">
    <citation type="journal article" date="1991" name="Mol. Cell. Biol.">
        <title>An endoplasmic reticulum-specific cyclophilin.</title>
        <authorList>
            <person name="Hasel K.W."/>
            <person name="Glass J.R."/>
            <person name="Godbout M."/>
            <person name="Sutcliffe J.G."/>
        </authorList>
    </citation>
    <scope>NUCLEOTIDE SEQUENCE [MRNA] OF 10-216</scope>
</reference>
<reference key="10">
    <citation type="journal article" date="2002" name="Mol. Biol. Cell">
        <title>A subset of chaperones and folding enzymes form multiprotein complexes in endoplasmic reticulum to bind nascent proteins.</title>
        <authorList>
            <person name="Meunier L."/>
            <person name="Usherwood Y.-K."/>
            <person name="Chung K.T."/>
            <person name="Hendershot L.M."/>
        </authorList>
    </citation>
    <scope>COMPONENT OF A CHAPERONE COMPLEX</scope>
</reference>
<reference key="11">
    <citation type="submission" date="2008-12" db="UniProtKB">
        <authorList>
            <person name="Lubec G."/>
            <person name="Chen W.-Q."/>
            <person name="Sun Y."/>
        </authorList>
    </citation>
    <scope>PROTEIN SEQUENCE OF 52-59; 64-76; 91-101; 138-150; 164-172 AND 197-207</scope>
    <scope>IDENTIFICATION BY MASS SPECTROMETRY</scope>
    <source>
        <tissue>Fetal brain cortex</tissue>
    </source>
</reference>
<reference key="12">
    <citation type="journal article" date="1992" name="Electrophoresis">
        <title>Microsequences of 145 proteins recorded in the two-dimensional gel protein database of normal human epidermal keratinocytes.</title>
        <authorList>
            <person name="Rasmussen H.H."/>
            <person name="van Damme J."/>
            <person name="Puype M."/>
            <person name="Gesser B."/>
            <person name="Celis J.E."/>
            <person name="Vandekerckhove J."/>
        </authorList>
    </citation>
    <scope>PROTEIN SEQUENCE OF 72-84 AND 159-165</scope>
</reference>
<reference key="13">
    <citation type="journal article" date="1992" name="J. Cell Biol.">
        <title>S-cyclophilin is retained intracellularly via a unique COOH-terminal sequence and colocalizes with the calcium storage protein calreticulin.</title>
        <authorList>
            <person name="Arber S."/>
            <person name="Krause K.-H."/>
            <person name="Caroni P."/>
        </authorList>
    </citation>
    <scope>SUBCELLULAR LOCATION</scope>
</reference>
<reference key="14">
    <citation type="journal article" date="2006" name="J. Proteome Res.">
        <title>Proteomic and bioinformatic characterization of the biogenesis and function of melanosomes.</title>
        <authorList>
            <person name="Chi A."/>
            <person name="Valencia J.C."/>
            <person name="Hu Z.-Z."/>
            <person name="Watabe H."/>
            <person name="Yamaguchi H."/>
            <person name="Mangini N.J."/>
            <person name="Huang H."/>
            <person name="Canfield V.A."/>
            <person name="Cheng K.C."/>
            <person name="Yang F."/>
            <person name="Abe R."/>
            <person name="Yamagishi S."/>
            <person name="Shabanowitz J."/>
            <person name="Hearing V.J."/>
            <person name="Wu C."/>
            <person name="Appella E."/>
            <person name="Hunt D.F."/>
        </authorList>
    </citation>
    <scope>SUBCELLULAR LOCATION [LARGE SCALE ANALYSIS]</scope>
    <source>
        <tissue>Melanoma</tissue>
    </source>
</reference>
<reference key="15">
    <citation type="journal article" date="2009" name="Am. J. Hum. Genet.">
        <title>PPIB mutations cause severe osteogenesis imperfecta.</title>
        <authorList>
            <person name="van Dijk F.S."/>
            <person name="Nesbitt I.M."/>
            <person name="Zwikstra E.H."/>
            <person name="Nikkels P.G."/>
            <person name="Piersma S.R."/>
            <person name="Fratantoni S.A."/>
            <person name="Jimenez C.R."/>
            <person name="Huizer M."/>
            <person name="Morsman A.C."/>
            <person name="Cobben J.M."/>
            <person name="van Roij M.H."/>
            <person name="Elting M.W."/>
            <person name="Verbeke J.I."/>
            <person name="Wijnaendts L.C."/>
            <person name="Shaw N.J."/>
            <person name="Hogler W."/>
            <person name="McKeown C."/>
            <person name="Sistermans E.A."/>
            <person name="Dalton A."/>
            <person name="Meijers-Heijboer H."/>
            <person name="Pals G."/>
        </authorList>
    </citation>
    <scope>INVOLVEMENT IN OI9</scope>
</reference>
<reference key="16">
    <citation type="journal article" date="2010" name="J. Virol.">
        <title>CD147/EMMPRIN acts as a functional entry receptor for measles virus on epithelial cells.</title>
        <authorList>
            <person name="Watanabe A."/>
            <person name="Yoneda M."/>
            <person name="Ikeda F."/>
            <person name="Terao-Muto Y."/>
            <person name="Sato H."/>
            <person name="Kai C."/>
        </authorList>
    </citation>
    <scope>INTERACTION WITH MEASLES VIRUS NUCLEOPROTEIN (MICROBIAL INFECTION)</scope>
    <scope>SUBCELLULAR LOCATION (MICROBIAL INFECTION)</scope>
</reference>
<reference key="17">
    <citation type="journal article" date="2010" name="PLoS Biol.">
        <title>Structural and biochemical characterization of the human cyclophilin family of peptidyl-prolyl isomerases.</title>
        <authorList>
            <person name="Davis T.L."/>
            <person name="Walker J.R."/>
            <person name="Campagna-Slater V."/>
            <person name="Finerty P.J."/>
            <person name="Paramanathan R."/>
            <person name="Bernstein G."/>
            <person name="MacKenzie F."/>
            <person name="Tempel W."/>
            <person name="Ouyang H."/>
            <person name="Lee W.H."/>
            <person name="Eisenmesser E.Z."/>
            <person name="Dhe-Paganon S."/>
        </authorList>
    </citation>
    <scope>FUNCTION</scope>
    <scope>CATALYTIC ACTIVITY</scope>
    <scope>ACTIVITY REGULATION</scope>
</reference>
<reference key="18">
    <citation type="journal article" date="2011" name="BMC Syst. Biol.">
        <title>Initial characterization of the human central proteome.</title>
        <authorList>
            <person name="Burkard T.R."/>
            <person name="Planyavsky M."/>
            <person name="Kaupe I."/>
            <person name="Breitwieser F.P."/>
            <person name="Buerckstuemmer T."/>
            <person name="Bennett K.L."/>
            <person name="Superti-Furga G."/>
            <person name="Colinge J."/>
        </authorList>
    </citation>
    <scope>IDENTIFICATION BY MASS SPECTROMETRY [LARGE SCALE ANALYSIS]</scope>
</reference>
<reference key="19">
    <citation type="journal article" date="2011" name="Hum. Mutat.">
        <title>Dymeclin, the gene underlying Dyggve-Melchior-Clausen syndrome, encodes a protein integral to extracellular matrix and Golgi organization and is associated with protein secretion pathways critical in bone development.</title>
        <authorList>
            <person name="Denais C."/>
            <person name="Dent C.L."/>
            <person name="Southgate L."/>
            <person name="Hoyle J."/>
            <person name="Dafou D."/>
            <person name="Trembath R.C."/>
            <person name="Machado R.D."/>
        </authorList>
    </citation>
    <scope>INTERACTION WITH DYM</scope>
</reference>
<reference key="20">
    <citation type="journal article" date="2014" name="J. Proteomics">
        <title>An enzyme assisted RP-RPLC approach for in-depth analysis of human liver phosphoproteome.</title>
        <authorList>
            <person name="Bian Y."/>
            <person name="Song C."/>
            <person name="Cheng K."/>
            <person name="Dong M."/>
            <person name="Wang F."/>
            <person name="Huang J."/>
            <person name="Sun D."/>
            <person name="Wang L."/>
            <person name="Ye M."/>
            <person name="Zou H."/>
        </authorList>
    </citation>
    <scope>IDENTIFICATION BY MASS SPECTROMETRY [LARGE SCALE ANALYSIS]</scope>
    <source>
        <tissue>Liver</tissue>
    </source>
</reference>
<reference key="21">
    <citation type="journal article" date="2015" name="Proteomics">
        <title>N-terminome analysis of the human mitochondrial proteome.</title>
        <authorList>
            <person name="Vaca Jacome A.S."/>
            <person name="Rabilloud T."/>
            <person name="Schaeffer-Reiss C."/>
            <person name="Rompais M."/>
            <person name="Ayoub D."/>
            <person name="Lane L."/>
            <person name="Bairoch A."/>
            <person name="Van Dorsselaer A."/>
            <person name="Carapito C."/>
        </authorList>
    </citation>
    <scope>IDENTIFICATION BY MASS SPECTROMETRY [LARGE SCALE ANALYSIS]</scope>
</reference>
<reference key="22">
    <citation type="journal article" date="1994" name="Proc. Natl. Acad. Sci. U.S.A.">
        <title>X-ray structure of a cyclophilin B/cyclosporin complex: comparison with cyclophilin A and delineation of its calcineurin-binding domain.</title>
        <authorList>
            <person name="Mikol V."/>
            <person name="Kallen J."/>
            <person name="Walkinshaw M.D."/>
        </authorList>
    </citation>
    <scope>X-RAY CRYSTALLOGRAPHY (1.85 ANGSTROMS) OF 39-216</scope>
</reference>
<reference key="23">
    <citation type="journal article" date="2010" name="J. Biol. Chem.">
        <title>Structural basis of cyclophilin B binding by the calnexin/calreticulin P-domain.</title>
        <authorList>
            <person name="Kozlov G."/>
            <person name="Bastos-Aristizabal S."/>
            <person name="Maattanen P."/>
            <person name="Rosenauer A."/>
            <person name="Zheng F."/>
            <person name="Killikelly A."/>
            <person name="Trempe J.F."/>
            <person name="Thomas D.Y."/>
            <person name="Gehring K."/>
        </authorList>
    </citation>
    <scope>X-RAY CRYSTALLOGRAPHY (1.2 ANGSTROMS) OF 34-216 IN COMPLEX WITH CLGN</scope>
    <scope>MUTAGENESIS OF LYS-129</scope>
    <scope>INTERACTION WITH CALR; CANX AND CLGN</scope>
</reference>
<reference key="24">
    <citation type="journal article" date="2010" name="N. Engl. J. Med.">
        <title>Lack of cyclophilin B in osteogenesis imperfecta with normal collagen folding.</title>
        <authorList>
            <person name="Barnes A.M."/>
            <person name="Carter E.M."/>
            <person name="Cabral W.A."/>
            <person name="Weis M."/>
            <person name="Chang W."/>
            <person name="Makareeva E."/>
            <person name="Leikin S."/>
            <person name="Rotimi C.N."/>
            <person name="Eyre D.R."/>
            <person name="Raggio C.L."/>
            <person name="Marini J.C."/>
        </authorList>
    </citation>
    <scope>VARIANT OI9 ARG-9</scope>
</reference>
<evidence type="ECO:0000250" key="1">
    <source>
        <dbReference type="UniProtKB" id="P24369"/>
    </source>
</evidence>
<evidence type="ECO:0000250" key="2">
    <source>
        <dbReference type="UniProtKB" id="Q99KR7"/>
    </source>
</evidence>
<evidence type="ECO:0000255" key="3"/>
<evidence type="ECO:0000255" key="4">
    <source>
        <dbReference type="PROSITE-ProRule" id="PRU00156"/>
    </source>
</evidence>
<evidence type="ECO:0000269" key="5">
    <source>
    </source>
</evidence>
<evidence type="ECO:0000269" key="6">
    <source>
    </source>
</evidence>
<evidence type="ECO:0000269" key="7">
    <source>
    </source>
</evidence>
<evidence type="ECO:0000269" key="8">
    <source>
    </source>
</evidence>
<evidence type="ECO:0000269" key="9">
    <source>
    </source>
</evidence>
<evidence type="ECO:0000269" key="10">
    <source>
    </source>
</evidence>
<evidence type="ECO:0000269" key="11">
    <source>
    </source>
</evidence>
<evidence type="ECO:0000269" key="12">
    <source>
    </source>
</evidence>
<evidence type="ECO:0000269" key="13">
    <source>
    </source>
</evidence>
<evidence type="ECO:0000269" key="14">
    <source>
    </source>
</evidence>
<evidence type="ECO:0000305" key="15"/>
<evidence type="ECO:0000305" key="16">
    <source>
    </source>
</evidence>
<evidence type="ECO:0007829" key="17">
    <source>
        <dbReference type="PDB" id="1CYN"/>
    </source>
</evidence>
<evidence type="ECO:0007829" key="18">
    <source>
        <dbReference type="PDB" id="3ICH"/>
    </source>
</evidence>
<evidence type="ECO:0007829" key="19">
    <source>
        <dbReference type="PDB" id="8K0M"/>
    </source>
</evidence>
<comment type="function">
    <text evidence="12">PPIase that catalyzes the cis-trans isomerization of proline imidic peptide bonds in oligopeptides and may therefore assist protein folding.</text>
</comment>
<comment type="catalytic activity">
    <reaction evidence="12">
        <text>[protein]-peptidylproline (omega=180) = [protein]-peptidylproline (omega=0)</text>
        <dbReference type="Rhea" id="RHEA:16237"/>
        <dbReference type="Rhea" id="RHEA-COMP:10747"/>
        <dbReference type="Rhea" id="RHEA-COMP:10748"/>
        <dbReference type="ChEBI" id="CHEBI:83833"/>
        <dbReference type="ChEBI" id="CHEBI:83834"/>
        <dbReference type="EC" id="5.2.1.8"/>
    </reaction>
</comment>
<comment type="activity regulation">
    <text evidence="16">Inhibited by cyclosporin A (CsA).</text>
</comment>
<comment type="subunit">
    <text evidence="5 13 14">Interacts with DYM. Interacts with CALR, CLGN and CANX. Part of a large chaperone multiprotein complex comprising DNAJB11, HSP90B1, HSPA5, HYOU, PDIA2, PDIA4, PDIA6, PPIB, SDF2L1, UGGT1 and very small amounts of ERP29, but not, or at very low levels, CALR nor CANX (PubMed:12475965).</text>
</comment>
<comment type="subunit">
    <text evidence="11">(Microbial infection) Interacts with measles virus nucleoprotein.</text>
</comment>
<comment type="interaction">
    <interactant intactId="EBI-359252">
        <id>P23284</id>
    </interactant>
    <interactant intactId="EBI-744695">
        <id>Q8N9N5</id>
        <label>BANP</label>
    </interactant>
    <organismsDiffer>false</organismsDiffer>
    <experiments>3</experiments>
</comment>
<comment type="interaction">
    <interactant intactId="EBI-359252">
        <id>P23284</id>
    </interactant>
    <interactant intactId="EBI-1210604">
        <id>Q7Z7K6</id>
        <label>CENPV</label>
    </interactant>
    <organismsDiffer>false</organismsDiffer>
    <experiments>3</experiments>
</comment>
<comment type="interaction">
    <interactant intactId="EBI-359252">
        <id>P23284</id>
    </interactant>
    <interactant intactId="EBI-2871106">
        <id>Q7RTS9</id>
        <label>DYM</label>
    </interactant>
    <organismsDiffer>false</organismsDiffer>
    <experiments>4</experiments>
</comment>
<comment type="interaction">
    <interactant intactId="EBI-359252">
        <id>P23284</id>
    </interactant>
    <interactant intactId="EBI-618189">
        <id>Q06547-2</id>
        <label>GABPB1</label>
    </interactant>
    <organismsDiffer>false</organismsDiffer>
    <experiments>3</experiments>
</comment>
<comment type="interaction">
    <interactant intactId="EBI-359252">
        <id>P23284</id>
    </interactant>
    <interactant intactId="EBI-25884370">
        <id>O43292-2</id>
        <label>GPAA1</label>
    </interactant>
    <organismsDiffer>false</organismsDiffer>
    <experiments>3</experiments>
</comment>
<comment type="interaction">
    <interactant intactId="EBI-359252">
        <id>P23284</id>
    </interactant>
    <interactant intactId="EBI-11959863">
        <id>Q9NWQ4-1</id>
        <label>GPATCH2L</label>
    </interactant>
    <organismsDiffer>false</organismsDiffer>
    <experiments>3</experiments>
</comment>
<comment type="interaction">
    <interactant intactId="EBI-359252">
        <id>P23284</id>
    </interactant>
    <interactant intactId="EBI-3923226">
        <id>P09017</id>
        <label>HOXC4</label>
    </interactant>
    <organismsDiffer>false</organismsDiffer>
    <experiments>3</experiments>
</comment>
<comment type="interaction">
    <interactant intactId="EBI-359252">
        <id>P23284</id>
    </interactant>
    <interactant intactId="EBI-355106">
        <id>P17066</id>
        <label>HSPA6</label>
    </interactant>
    <organismsDiffer>false</organismsDiffer>
    <experiments>3</experiments>
</comment>
<comment type="interaction">
    <interactant intactId="EBI-359252">
        <id>P23284</id>
    </interactant>
    <interactant intactId="EBI-713450">
        <id>Q02363</id>
        <label>ID2</label>
    </interactant>
    <organismsDiffer>false</organismsDiffer>
    <experiments>3</experiments>
</comment>
<comment type="interaction">
    <interactant intactId="EBI-359252">
        <id>P23284</id>
    </interactant>
    <interactant intactId="EBI-743960">
        <id>Q8N5Z5</id>
        <label>KCTD17</label>
    </interactant>
    <organismsDiffer>false</organismsDiffer>
    <experiments>3</experiments>
</comment>
<comment type="interaction">
    <interactant intactId="EBI-359252">
        <id>P23284</id>
    </interactant>
    <interactant intactId="EBI-750750">
        <id>Q9Y4X4</id>
        <label>KLF12</label>
    </interactant>
    <organismsDiffer>false</organismsDiffer>
    <experiments>3</experiments>
</comment>
<comment type="interaction">
    <interactant intactId="EBI-359252">
        <id>P23284</id>
    </interactant>
    <interactant intactId="EBI-25835523">
        <id>Q9H2C1</id>
        <label>LHX5</label>
    </interactant>
    <organismsDiffer>false</organismsDiffer>
    <experiments>3</experiments>
</comment>
<comment type="interaction">
    <interactant intactId="EBI-359252">
        <id>P23284</id>
    </interactant>
    <interactant intactId="EBI-1054653">
        <id>P13667</id>
        <label>PDIA4</label>
    </interactant>
    <organismsDiffer>false</organismsDiffer>
    <experiments>2</experiments>
</comment>
<comment type="interaction">
    <interactant intactId="EBI-359252">
        <id>P23284</id>
    </interactant>
    <interactant intactId="EBI-594747">
        <id>P40855</id>
        <label>PEX19</label>
    </interactant>
    <organismsDiffer>false</organismsDiffer>
    <experiments>6</experiments>
</comment>
<comment type="interaction">
    <interactant intactId="EBI-359252">
        <id>P23284</id>
    </interactant>
    <interactant intactId="EBI-25884400">
        <id>Q9NWS8-3</id>
        <label>RMND1</label>
    </interactant>
    <organismsDiffer>false</organismsDiffer>
    <experiments>3</experiments>
</comment>
<comment type="interaction">
    <interactant intactId="EBI-359252">
        <id>P23284</id>
    </interactant>
    <interactant intactId="EBI-347996">
        <id>O43765</id>
        <label>SGTA</label>
    </interactant>
    <organismsDiffer>false</organismsDiffer>
    <experiments>6</experiments>
</comment>
<comment type="interaction">
    <interactant intactId="EBI-359252">
        <id>P23284</id>
    </interactant>
    <interactant intactId="EBI-744081">
        <id>Q96EQ0</id>
        <label>SGTB</label>
    </interactant>
    <organismsDiffer>false</organismsDiffer>
    <experiments>4</experiments>
</comment>
<comment type="interaction">
    <interactant intactId="EBI-359252">
        <id>P23284</id>
    </interactant>
    <interactant intactId="EBI-448878">
        <id>Q13586</id>
        <label>STIM1</label>
    </interactant>
    <organismsDiffer>false</organismsDiffer>
    <experiments>3</experiments>
</comment>
<comment type="interaction">
    <interactant intactId="EBI-359252">
        <id>P23284</id>
    </interactant>
    <interactant intactId="EBI-17257686">
        <id>Q13061-2</id>
        <label>TRDN</label>
    </interactant>
    <organismsDiffer>false</organismsDiffer>
    <experiments>3</experiments>
</comment>
<comment type="interaction">
    <interactant intactId="EBI-359252">
        <id>P23284</id>
    </interactant>
    <interactant intactId="EBI-741480">
        <id>Q9UMX0</id>
        <label>UBQLN1</label>
    </interactant>
    <organismsDiffer>false</organismsDiffer>
    <experiments>3</experiments>
</comment>
<comment type="interaction">
    <interactant intactId="EBI-359252">
        <id>P23284</id>
    </interactant>
    <interactant intactId="EBI-10173939">
        <id>Q9UMX0-2</id>
        <label>UBQLN1</label>
    </interactant>
    <organismsDiffer>false</organismsDiffer>
    <experiments>3</experiments>
</comment>
<comment type="interaction">
    <interactant intactId="EBI-359252">
        <id>P23284</id>
    </interactant>
    <interactant intactId="EBI-947187">
        <id>Q9UHD9</id>
        <label>UBQLN2</label>
    </interactant>
    <organismsDiffer>false</organismsDiffer>
    <experiments>5</experiments>
</comment>
<comment type="interaction">
    <interactant intactId="EBI-359252">
        <id>P23284</id>
    </interactant>
    <interactant intactId="EBI-12040603">
        <id>Q9NZC7-5</id>
        <label>WWOX</label>
    </interactant>
    <organismsDiffer>false</organismsDiffer>
    <experiments>3</experiments>
</comment>
<comment type="interaction">
    <interactant intactId="EBI-359252">
        <id>P23284</id>
    </interactant>
    <interactant intactId="EBI-13387614">
        <id>A0A087WZY1</id>
    </interactant>
    <organismsDiffer>false</organismsDiffer>
    <experiments>3</experiments>
</comment>
<comment type="interaction">
    <interactant intactId="EBI-359252">
        <id>P23284</id>
    </interactant>
    <interactant intactId="EBI-9005440">
        <id>PRO_0000037552</id>
        <dbReference type="UniProtKB" id="Q9WMX2"/>
    </interactant>
    <organismsDiffer>true</organismsDiffer>
    <experiments>7</experiments>
</comment>
<comment type="interaction">
    <interactant intactId="EBI-8771982">
        <id>PRO_0000025479</id>
    </interactant>
    <interactant intactId="EBI-1054653">
        <id>P13667</id>
        <label>PDIA4</label>
    </interactant>
    <organismsDiffer>false</organismsDiffer>
    <experiments>3</experiments>
</comment>
<comment type="subcellular location">
    <subcellularLocation>
        <location evidence="11">Virion</location>
    </subcellularLocation>
    <text>(Microbial infection).</text>
</comment>
<comment type="subcellular location">
    <subcellularLocation>
        <location evidence="6">Endoplasmic reticulum lumen</location>
    </subcellularLocation>
    <subcellularLocation>
        <location evidence="7">Melanosome</location>
    </subcellularLocation>
    <text evidence="7">Identified by mass spectrometry in melanosome fractions from stage I to stage IV (PubMed:17081065).</text>
</comment>
<comment type="disease" evidence="8 10">
    <disease id="DI-02542">
        <name>Osteogenesis imperfecta 9</name>
        <acronym>OI9</acronym>
        <description>A form of osteogenesis imperfecta, a disorder of bone formation characterized by low bone mass, bone fragility and susceptibility to fractures after minimal trauma. Disease severity ranges from very mild forms without fractures to intrauterine fractures and perinatal lethality. Extraskeletal manifestations, which affect a variable number of patients, are dentinogenesis imperfecta, hearing loss, and blue sclerae. OI9 is a severe autosomal recessive form of the disorder.</description>
        <dbReference type="MIM" id="259440"/>
    </disease>
    <text>The disease is caused by variants affecting the gene represented in this entry.</text>
</comment>
<comment type="similarity">
    <text evidence="15">Belongs to the cyclophilin-type PPIase family. PPIase B subfamily.</text>
</comment>
<comment type="caution">
    <text evidence="15">It is uncertain whether Met-1 or Met-9 is the initiator.</text>
</comment>
<comment type="sequence caution" evidence="15">
    <conflict type="erroneous initiation">
        <sequence resource="EMBL-CDS" id="AAA52150"/>
    </conflict>
</comment>
<comment type="online information" name="Osteogenesis imperfecta variant database">
    <link uri="https://www.LOVD.nl/PPIB"/>
    <text>The PPIB gene homepage</text>
</comment>
<keyword id="KW-0002">3D-structure</keyword>
<keyword id="KW-0007">Acetylation</keyword>
<keyword id="KW-0903">Direct protein sequencing</keyword>
<keyword id="KW-0225">Disease variant</keyword>
<keyword id="KW-0242">Dwarfism</keyword>
<keyword id="KW-0256">Endoplasmic reticulum</keyword>
<keyword id="KW-0325">Glycoprotein</keyword>
<keyword id="KW-0413">Isomerase</keyword>
<keyword id="KW-1065">Osteogenesis imperfecta</keyword>
<keyword id="KW-1267">Proteomics identification</keyword>
<keyword id="KW-1185">Reference proteome</keyword>
<keyword id="KW-0697">Rotamase</keyword>
<keyword id="KW-0702">S-nitrosylation</keyword>
<keyword id="KW-0732">Signal</keyword>
<keyword id="KW-0946">Virion</keyword>
<accession>P23284</accession>
<accession>A8K534</accession>
<accession>Q6IBH5</accession>
<accession>Q9BVK5</accession>
<proteinExistence type="evidence at protein level"/>
<dbReference type="EC" id="5.2.1.8" evidence="12"/>
<dbReference type="EMBL" id="M63573">
    <property type="protein sequence ID" value="AAA36601.1"/>
    <property type="molecule type" value="mRNA"/>
</dbReference>
<dbReference type="EMBL" id="AK291149">
    <property type="protein sequence ID" value="BAF83838.1"/>
    <property type="molecule type" value="mRNA"/>
</dbReference>
<dbReference type="EMBL" id="CR456829">
    <property type="protein sequence ID" value="CAG33110.1"/>
    <property type="molecule type" value="mRNA"/>
</dbReference>
<dbReference type="EMBL" id="AY962310">
    <property type="protein sequence ID" value="AAX44050.1"/>
    <property type="molecule type" value="Genomic_DNA"/>
</dbReference>
<dbReference type="EMBL" id="AC100840">
    <property type="status" value="NOT_ANNOTATED_CDS"/>
    <property type="molecule type" value="Genomic_DNA"/>
</dbReference>
<dbReference type="EMBL" id="CH471082">
    <property type="protein sequence ID" value="EAW77669.1"/>
    <property type="molecule type" value="Genomic_DNA"/>
</dbReference>
<dbReference type="EMBL" id="BC001125">
    <property type="protein sequence ID" value="AAH01125.1"/>
    <property type="molecule type" value="mRNA"/>
</dbReference>
<dbReference type="EMBL" id="BC008848">
    <property type="protein sequence ID" value="AAH08848.1"/>
    <property type="molecule type" value="mRNA"/>
</dbReference>
<dbReference type="EMBL" id="BC020800">
    <property type="protein sequence ID" value="AAH20800.1"/>
    <property type="molecule type" value="mRNA"/>
</dbReference>
<dbReference type="EMBL" id="BC032138">
    <property type="protein sequence ID" value="AAH32138.1"/>
    <property type="molecule type" value="mRNA"/>
</dbReference>
<dbReference type="EMBL" id="M60857">
    <property type="protein sequence ID" value="AAA52150.1"/>
    <property type="status" value="ALT_INIT"/>
    <property type="molecule type" value="mRNA"/>
</dbReference>
<dbReference type="EMBL" id="M60457">
    <property type="protein sequence ID" value="AAA35733.1"/>
    <property type="molecule type" value="mRNA"/>
</dbReference>
<dbReference type="CCDS" id="CCDS10191.1"/>
<dbReference type="PIR" id="A39118">
    <property type="entry name" value="CSHUB"/>
</dbReference>
<dbReference type="RefSeq" id="NP_000933.1">
    <property type="nucleotide sequence ID" value="NM_000942.5"/>
</dbReference>
<dbReference type="PDB" id="1CYN">
    <property type="method" value="X-ray"/>
    <property type="resolution" value="1.85 A"/>
    <property type="chains" value="A=39-216"/>
</dbReference>
<dbReference type="PDB" id="3ICH">
    <property type="method" value="X-ray"/>
    <property type="resolution" value="1.20 A"/>
    <property type="chains" value="A=34-216"/>
</dbReference>
<dbReference type="PDB" id="3ICI">
    <property type="method" value="X-ray"/>
    <property type="resolution" value="1.70 A"/>
    <property type="chains" value="A/B=34-216"/>
</dbReference>
<dbReference type="PDB" id="8K0F">
    <property type="method" value="EM"/>
    <property type="resolution" value="3.37 A"/>
    <property type="chains" value="C=1-216"/>
</dbReference>
<dbReference type="PDB" id="8K0I">
    <property type="method" value="EM"/>
    <property type="resolution" value="3.62 A"/>
    <property type="chains" value="C/c=1-216"/>
</dbReference>
<dbReference type="PDB" id="8K0M">
    <property type="method" value="EM"/>
    <property type="resolution" value="3.17 A"/>
    <property type="chains" value="C=1-216"/>
</dbReference>
<dbReference type="PDB" id="8K17">
    <property type="method" value="EM"/>
    <property type="resolution" value="3.18 A"/>
    <property type="chains" value="C=1-216"/>
</dbReference>
<dbReference type="PDB" id="8KC9">
    <property type="method" value="EM"/>
    <property type="resolution" value="3.75 A"/>
    <property type="chains" value="C=1-216"/>
</dbReference>
<dbReference type="PDBsum" id="1CYN"/>
<dbReference type="PDBsum" id="3ICH"/>
<dbReference type="PDBsum" id="3ICI"/>
<dbReference type="PDBsum" id="8K0F"/>
<dbReference type="PDBsum" id="8K0I"/>
<dbReference type="PDBsum" id="8K0M"/>
<dbReference type="PDBsum" id="8K17"/>
<dbReference type="PDBsum" id="8KC9"/>
<dbReference type="BMRB" id="P23284"/>
<dbReference type="EMDB" id="EMD-36763"/>
<dbReference type="EMDB" id="EMD-36765"/>
<dbReference type="EMDB" id="EMD-36774"/>
<dbReference type="EMDB" id="EMD-36787"/>
<dbReference type="EMDB" id="EMD-37097"/>
<dbReference type="SMR" id="P23284"/>
<dbReference type="BioGRID" id="111475">
    <property type="interactions" value="355"/>
</dbReference>
<dbReference type="FunCoup" id="P23284">
    <property type="interactions" value="2026"/>
</dbReference>
<dbReference type="IntAct" id="P23284">
    <property type="interactions" value="132"/>
</dbReference>
<dbReference type="MINT" id="P23284"/>
<dbReference type="STRING" id="9606.ENSP00000300026"/>
<dbReference type="BindingDB" id="P23284"/>
<dbReference type="ChEMBL" id="CHEMBL2075"/>
<dbReference type="DrugBank" id="DB04447">
    <property type="generic name" value="1,4-Dithiothreitol"/>
</dbReference>
<dbReference type="DrugBank" id="DB00172">
    <property type="generic name" value="Proline"/>
</dbReference>
<dbReference type="DrugCentral" id="P23284"/>
<dbReference type="GlyConnect" id="2943">
    <property type="glycosylation" value="1 N-Linked glycan (1 site)"/>
</dbReference>
<dbReference type="GlyCosmos" id="P23284">
    <property type="glycosylation" value="1 site, 2 glycans"/>
</dbReference>
<dbReference type="GlyGen" id="P23284">
    <property type="glycosylation" value="2 sites, 7 N-linked glycans (1 site), 1 O-linked glycan (1 site)"/>
</dbReference>
<dbReference type="iPTMnet" id="P23284"/>
<dbReference type="MetOSite" id="P23284"/>
<dbReference type="PhosphoSitePlus" id="P23284"/>
<dbReference type="SwissPalm" id="P23284"/>
<dbReference type="BioMuta" id="PPIB"/>
<dbReference type="DMDM" id="215273869"/>
<dbReference type="OGP" id="P23284"/>
<dbReference type="REPRODUCTION-2DPAGE" id="IPI00646304"/>
<dbReference type="jPOST" id="P23284"/>
<dbReference type="MassIVE" id="P23284"/>
<dbReference type="PaxDb" id="9606-ENSP00000300026"/>
<dbReference type="PeptideAtlas" id="P23284"/>
<dbReference type="PRIDE" id="P23284"/>
<dbReference type="ProteomicsDB" id="54078"/>
<dbReference type="Pumba" id="P23284"/>
<dbReference type="TopDownProteomics" id="P23284"/>
<dbReference type="Antibodypedia" id="2584">
    <property type="antibodies" value="518 antibodies from 34 providers"/>
</dbReference>
<dbReference type="DNASU" id="5479"/>
<dbReference type="Ensembl" id="ENST00000300026.4">
    <property type="protein sequence ID" value="ENSP00000300026.4"/>
    <property type="gene ID" value="ENSG00000166794.7"/>
</dbReference>
<dbReference type="GeneID" id="5479"/>
<dbReference type="KEGG" id="hsa:5479"/>
<dbReference type="MANE-Select" id="ENST00000300026.4">
    <property type="protein sequence ID" value="ENSP00000300026.4"/>
    <property type="RefSeq nucleotide sequence ID" value="NM_000942.5"/>
    <property type="RefSeq protein sequence ID" value="NP_000933.1"/>
</dbReference>
<dbReference type="UCSC" id="uc002and.4">
    <property type="organism name" value="human"/>
</dbReference>
<dbReference type="AGR" id="HGNC:9255"/>
<dbReference type="CTD" id="5479"/>
<dbReference type="DisGeNET" id="5479"/>
<dbReference type="GeneCards" id="PPIB"/>
<dbReference type="HGNC" id="HGNC:9255">
    <property type="gene designation" value="PPIB"/>
</dbReference>
<dbReference type="HPA" id="ENSG00000166794">
    <property type="expression patterns" value="Low tissue specificity"/>
</dbReference>
<dbReference type="MalaCards" id="PPIB"/>
<dbReference type="MIM" id="123841">
    <property type="type" value="gene"/>
</dbReference>
<dbReference type="MIM" id="259440">
    <property type="type" value="phenotype"/>
</dbReference>
<dbReference type="neXtProt" id="NX_P23284"/>
<dbReference type="OpenTargets" id="ENSG00000166794"/>
<dbReference type="Orphanet" id="216804">
    <property type="disease" value="Osteogenesis imperfecta type 2"/>
</dbReference>
<dbReference type="Orphanet" id="216812">
    <property type="disease" value="Osteogenesis imperfecta type 3"/>
</dbReference>
<dbReference type="Orphanet" id="216820">
    <property type="disease" value="Osteogenesis imperfecta type 4"/>
</dbReference>
<dbReference type="PharmGKB" id="PA33580"/>
<dbReference type="VEuPathDB" id="HostDB:ENSG00000166794"/>
<dbReference type="eggNOG" id="KOG0880">
    <property type="taxonomic scope" value="Eukaryota"/>
</dbReference>
<dbReference type="GeneTree" id="ENSGT00940000158007"/>
<dbReference type="HOGENOM" id="CLU_012062_4_2_1"/>
<dbReference type="InParanoid" id="P23284"/>
<dbReference type="OMA" id="ENHEITH"/>
<dbReference type="OrthoDB" id="193499at2759"/>
<dbReference type="PAN-GO" id="P23284">
    <property type="GO annotations" value="6 GO annotations based on evolutionary models"/>
</dbReference>
<dbReference type="PhylomeDB" id="P23284"/>
<dbReference type="TreeFam" id="TF354259"/>
<dbReference type="BioCyc" id="MetaCyc:HS09452-MONOMER"/>
<dbReference type="BRENDA" id="5.2.1.8">
    <property type="organism ID" value="2681"/>
</dbReference>
<dbReference type="PathwayCommons" id="P23284"/>
<dbReference type="Reactome" id="R-HSA-1650814">
    <property type="pathway name" value="Collagen biosynthesis and modifying enzymes"/>
</dbReference>
<dbReference type="Reactome" id="R-HSA-9692916">
    <property type="pathway name" value="SARS-CoV-1 activates/modulates innate immune responses"/>
</dbReference>
<dbReference type="SignaLink" id="P23284"/>
<dbReference type="BioGRID-ORCS" id="5479">
    <property type="hits" value="16 hits in 1159 CRISPR screens"/>
</dbReference>
<dbReference type="CD-CODE" id="91857CE7">
    <property type="entry name" value="Nucleolus"/>
</dbReference>
<dbReference type="CD-CODE" id="FB4E32DD">
    <property type="entry name" value="Presynaptic clusters and postsynaptic densities"/>
</dbReference>
<dbReference type="ChiTaRS" id="PPIB">
    <property type="organism name" value="human"/>
</dbReference>
<dbReference type="EvolutionaryTrace" id="P23284"/>
<dbReference type="GeneWiki" id="PPIB"/>
<dbReference type="GenomeRNAi" id="5479"/>
<dbReference type="Pharos" id="P23284">
    <property type="development level" value="Tchem"/>
</dbReference>
<dbReference type="PRO" id="PR:P23284"/>
<dbReference type="Proteomes" id="UP000005640">
    <property type="component" value="Chromosome 15"/>
</dbReference>
<dbReference type="RNAct" id="P23284">
    <property type="molecule type" value="protein"/>
</dbReference>
<dbReference type="Bgee" id="ENSG00000166794">
    <property type="expression patterns" value="Expressed in stromal cell of endometrium and 213 other cell types or tissues"/>
</dbReference>
<dbReference type="GO" id="GO:0005737">
    <property type="term" value="C:cytoplasm"/>
    <property type="evidence" value="ECO:0000318"/>
    <property type="project" value="GO_Central"/>
</dbReference>
<dbReference type="GO" id="GO:0005829">
    <property type="term" value="C:cytosol"/>
    <property type="evidence" value="ECO:0000304"/>
    <property type="project" value="Reactome"/>
</dbReference>
<dbReference type="GO" id="GO:0005783">
    <property type="term" value="C:endoplasmic reticulum"/>
    <property type="evidence" value="ECO:0000314"/>
    <property type="project" value="UniProtKB"/>
</dbReference>
<dbReference type="GO" id="GO:0034663">
    <property type="term" value="C:endoplasmic reticulum chaperone complex"/>
    <property type="evidence" value="ECO:0007669"/>
    <property type="project" value="Ensembl"/>
</dbReference>
<dbReference type="GO" id="GO:0005788">
    <property type="term" value="C:endoplasmic reticulum lumen"/>
    <property type="evidence" value="ECO:0000304"/>
    <property type="project" value="Reactome"/>
</dbReference>
<dbReference type="GO" id="GO:0070062">
    <property type="term" value="C:extracellular exosome"/>
    <property type="evidence" value="ECO:0007005"/>
    <property type="project" value="UniProtKB"/>
</dbReference>
<dbReference type="GO" id="GO:0005925">
    <property type="term" value="C:focal adhesion"/>
    <property type="evidence" value="ECO:0007005"/>
    <property type="project" value="UniProtKB"/>
</dbReference>
<dbReference type="GO" id="GO:0043231">
    <property type="term" value="C:intracellular membrane-bounded organelle"/>
    <property type="evidence" value="ECO:0000318"/>
    <property type="project" value="GO_Central"/>
</dbReference>
<dbReference type="GO" id="GO:0042470">
    <property type="term" value="C:melanosome"/>
    <property type="evidence" value="ECO:0007669"/>
    <property type="project" value="UniProtKB-SubCell"/>
</dbReference>
<dbReference type="GO" id="GO:0016020">
    <property type="term" value="C:membrane"/>
    <property type="evidence" value="ECO:0007005"/>
    <property type="project" value="UniProtKB"/>
</dbReference>
<dbReference type="GO" id="GO:0005654">
    <property type="term" value="C:nucleoplasm"/>
    <property type="evidence" value="ECO:0000314"/>
    <property type="project" value="HPA"/>
</dbReference>
<dbReference type="GO" id="GO:0005634">
    <property type="term" value="C:nucleus"/>
    <property type="evidence" value="ECO:0007005"/>
    <property type="project" value="UniProtKB"/>
</dbReference>
<dbReference type="GO" id="GO:0048471">
    <property type="term" value="C:perinuclear region of cytoplasm"/>
    <property type="evidence" value="ECO:0000314"/>
    <property type="project" value="AgBase"/>
</dbReference>
<dbReference type="GO" id="GO:0032991">
    <property type="term" value="C:protein-containing complex"/>
    <property type="evidence" value="ECO:0000250"/>
    <property type="project" value="CAFA"/>
</dbReference>
<dbReference type="GO" id="GO:0005790">
    <property type="term" value="C:smooth endoplasmic reticulum"/>
    <property type="evidence" value="ECO:0007669"/>
    <property type="project" value="Ensembl"/>
</dbReference>
<dbReference type="GO" id="GO:0016018">
    <property type="term" value="F:cyclosporin A binding"/>
    <property type="evidence" value="ECO:0000318"/>
    <property type="project" value="GO_Central"/>
</dbReference>
<dbReference type="GO" id="GO:0003755">
    <property type="term" value="F:peptidyl-prolyl cis-trans isomerase activity"/>
    <property type="evidence" value="ECO:0000314"/>
    <property type="project" value="UniProtKB"/>
</dbReference>
<dbReference type="GO" id="GO:0003723">
    <property type="term" value="F:RNA binding"/>
    <property type="evidence" value="ECO:0007005"/>
    <property type="project" value="UniProtKB"/>
</dbReference>
<dbReference type="GO" id="GO:0070063">
    <property type="term" value="F:RNA polymerase binding"/>
    <property type="evidence" value="ECO:0000353"/>
    <property type="project" value="AgBase"/>
</dbReference>
<dbReference type="GO" id="GO:0051082">
    <property type="term" value="F:unfolded protein binding"/>
    <property type="evidence" value="ECO:0000304"/>
    <property type="project" value="ProtInc"/>
</dbReference>
<dbReference type="GO" id="GO:0060348">
    <property type="term" value="P:bone development"/>
    <property type="evidence" value="ECO:0000315"/>
    <property type="project" value="UniProtKB"/>
</dbReference>
<dbReference type="GO" id="GO:0061077">
    <property type="term" value="P:chaperone-mediated protein folding"/>
    <property type="evidence" value="ECO:0000314"/>
    <property type="project" value="UniProtKB"/>
</dbReference>
<dbReference type="GO" id="GO:0030593">
    <property type="term" value="P:neutrophil chemotaxis"/>
    <property type="evidence" value="ECO:0000314"/>
    <property type="project" value="UniProtKB"/>
</dbReference>
<dbReference type="GO" id="GO:0044829">
    <property type="term" value="P:positive regulation by host of viral genome replication"/>
    <property type="evidence" value="ECO:0000315"/>
    <property type="project" value="AgBase"/>
</dbReference>
<dbReference type="GO" id="GO:0044794">
    <property type="term" value="P:positive regulation by host of viral process"/>
    <property type="evidence" value="ECO:0000315"/>
    <property type="project" value="AgBase"/>
</dbReference>
<dbReference type="GO" id="GO:0040018">
    <property type="term" value="P:positive regulation of multicellular organism growth"/>
    <property type="evidence" value="ECO:0000315"/>
    <property type="project" value="UniProtKB"/>
</dbReference>
<dbReference type="GO" id="GO:0006457">
    <property type="term" value="P:protein folding"/>
    <property type="evidence" value="ECO:0000318"/>
    <property type="project" value="GO_Central"/>
</dbReference>
<dbReference type="GO" id="GO:0050821">
    <property type="term" value="P:protein stabilization"/>
    <property type="evidence" value="ECO:0000315"/>
    <property type="project" value="UniProtKB"/>
</dbReference>
<dbReference type="CDD" id="cd01926">
    <property type="entry name" value="cyclophilin_ABH_like"/>
    <property type="match status" value="1"/>
</dbReference>
<dbReference type="FunFam" id="2.40.100.10:FF:000001">
    <property type="entry name" value="Peptidyl-prolyl cis-trans isomerase"/>
    <property type="match status" value="1"/>
</dbReference>
<dbReference type="Gene3D" id="2.40.100.10">
    <property type="entry name" value="Cyclophilin-like"/>
    <property type="match status" value="1"/>
</dbReference>
<dbReference type="InterPro" id="IPR029000">
    <property type="entry name" value="Cyclophilin-like_dom_sf"/>
</dbReference>
<dbReference type="InterPro" id="IPR020892">
    <property type="entry name" value="Cyclophilin-type_PPIase_CS"/>
</dbReference>
<dbReference type="InterPro" id="IPR002130">
    <property type="entry name" value="Cyclophilin-type_PPIase_dom"/>
</dbReference>
<dbReference type="PANTHER" id="PTHR11071">
    <property type="entry name" value="PEPTIDYL-PROLYL CIS-TRANS ISOMERASE"/>
    <property type="match status" value="1"/>
</dbReference>
<dbReference type="PANTHER" id="PTHR11071:SF477">
    <property type="entry name" value="PEPTIDYL-PROLYL CIS-TRANS ISOMERASE B"/>
    <property type="match status" value="1"/>
</dbReference>
<dbReference type="Pfam" id="PF00160">
    <property type="entry name" value="Pro_isomerase"/>
    <property type="match status" value="1"/>
</dbReference>
<dbReference type="PRINTS" id="PR00153">
    <property type="entry name" value="CSAPPISMRASE"/>
</dbReference>
<dbReference type="SUPFAM" id="SSF50891">
    <property type="entry name" value="Cyclophilin-like"/>
    <property type="match status" value="1"/>
</dbReference>
<dbReference type="PROSITE" id="PS00170">
    <property type="entry name" value="CSA_PPIASE_1"/>
    <property type="match status" value="1"/>
</dbReference>
<dbReference type="PROSITE" id="PS50072">
    <property type="entry name" value="CSA_PPIASE_2"/>
    <property type="match status" value="1"/>
</dbReference>
<organism>
    <name type="scientific">Homo sapiens</name>
    <name type="common">Human</name>
    <dbReference type="NCBI Taxonomy" id="9606"/>
    <lineage>
        <taxon>Eukaryota</taxon>
        <taxon>Metazoa</taxon>
        <taxon>Chordata</taxon>
        <taxon>Craniata</taxon>
        <taxon>Vertebrata</taxon>
        <taxon>Euteleostomi</taxon>
        <taxon>Mammalia</taxon>
        <taxon>Eutheria</taxon>
        <taxon>Euarchontoglires</taxon>
        <taxon>Primates</taxon>
        <taxon>Haplorrhini</taxon>
        <taxon>Catarrhini</taxon>
        <taxon>Hominidae</taxon>
        <taxon>Homo</taxon>
    </lineage>
</organism>